<accession>Q2VEC7</accession>
<organism>
    <name type="scientific">Solanum tuberosum</name>
    <name type="common">Potato</name>
    <dbReference type="NCBI Taxonomy" id="4113"/>
    <lineage>
        <taxon>Eukaryota</taxon>
        <taxon>Viridiplantae</taxon>
        <taxon>Streptophyta</taxon>
        <taxon>Embryophyta</taxon>
        <taxon>Tracheophyta</taxon>
        <taxon>Spermatophyta</taxon>
        <taxon>Magnoliopsida</taxon>
        <taxon>eudicotyledons</taxon>
        <taxon>Gunneridae</taxon>
        <taxon>Pentapetalae</taxon>
        <taxon>asterids</taxon>
        <taxon>lamiids</taxon>
        <taxon>Solanales</taxon>
        <taxon>Solanaceae</taxon>
        <taxon>Solanoideae</taxon>
        <taxon>Solaneae</taxon>
        <taxon>Solanum</taxon>
    </lineage>
</organism>
<feature type="chain" id="PRO_0000245674" description="NAD(P)H-quinone oxidoreductase subunit I, chloroplastic">
    <location>
        <begin position="1"/>
        <end position="167"/>
    </location>
</feature>
<feature type="domain" description="4Fe-4S ferredoxin-type 1" evidence="1">
    <location>
        <begin position="55"/>
        <end position="84"/>
    </location>
</feature>
<feature type="domain" description="4Fe-4S ferredoxin-type 2" evidence="1">
    <location>
        <begin position="95"/>
        <end position="124"/>
    </location>
</feature>
<feature type="binding site" evidence="1">
    <location>
        <position position="64"/>
    </location>
    <ligand>
        <name>[4Fe-4S] cluster</name>
        <dbReference type="ChEBI" id="CHEBI:49883"/>
        <label>1</label>
    </ligand>
</feature>
<feature type="binding site" evidence="1">
    <location>
        <position position="67"/>
    </location>
    <ligand>
        <name>[4Fe-4S] cluster</name>
        <dbReference type="ChEBI" id="CHEBI:49883"/>
        <label>1</label>
    </ligand>
</feature>
<feature type="binding site" evidence="1">
    <location>
        <position position="70"/>
    </location>
    <ligand>
        <name>[4Fe-4S] cluster</name>
        <dbReference type="ChEBI" id="CHEBI:49883"/>
        <label>1</label>
    </ligand>
</feature>
<feature type="binding site" evidence="1">
    <location>
        <position position="74"/>
    </location>
    <ligand>
        <name>[4Fe-4S] cluster</name>
        <dbReference type="ChEBI" id="CHEBI:49883"/>
        <label>2</label>
    </ligand>
</feature>
<feature type="binding site" evidence="1">
    <location>
        <position position="104"/>
    </location>
    <ligand>
        <name>[4Fe-4S] cluster</name>
        <dbReference type="ChEBI" id="CHEBI:49883"/>
        <label>2</label>
    </ligand>
</feature>
<feature type="binding site" evidence="1">
    <location>
        <position position="107"/>
    </location>
    <ligand>
        <name>[4Fe-4S] cluster</name>
        <dbReference type="ChEBI" id="CHEBI:49883"/>
        <label>2</label>
    </ligand>
</feature>
<feature type="binding site" evidence="1">
    <location>
        <position position="110"/>
    </location>
    <ligand>
        <name>[4Fe-4S] cluster</name>
        <dbReference type="ChEBI" id="CHEBI:49883"/>
        <label>2</label>
    </ligand>
</feature>
<feature type="binding site" evidence="1">
    <location>
        <position position="114"/>
    </location>
    <ligand>
        <name>[4Fe-4S] cluster</name>
        <dbReference type="ChEBI" id="CHEBI:49883"/>
        <label>1</label>
    </ligand>
</feature>
<comment type="function">
    <text evidence="1">NDH shuttles electrons from NAD(P)H:plastoquinone, via FMN and iron-sulfur (Fe-S) centers, to quinones in the photosynthetic chain and possibly in a chloroplast respiratory chain. The immediate electron acceptor for the enzyme in this species is believed to be plastoquinone. Couples the redox reaction to proton translocation, and thus conserves the redox energy in a proton gradient.</text>
</comment>
<comment type="catalytic activity">
    <reaction evidence="1">
        <text>a plastoquinone + NADH + (n+1) H(+)(in) = a plastoquinol + NAD(+) + n H(+)(out)</text>
        <dbReference type="Rhea" id="RHEA:42608"/>
        <dbReference type="Rhea" id="RHEA-COMP:9561"/>
        <dbReference type="Rhea" id="RHEA-COMP:9562"/>
        <dbReference type="ChEBI" id="CHEBI:15378"/>
        <dbReference type="ChEBI" id="CHEBI:17757"/>
        <dbReference type="ChEBI" id="CHEBI:57540"/>
        <dbReference type="ChEBI" id="CHEBI:57945"/>
        <dbReference type="ChEBI" id="CHEBI:62192"/>
    </reaction>
</comment>
<comment type="catalytic activity">
    <reaction evidence="1">
        <text>a plastoquinone + NADPH + (n+1) H(+)(in) = a plastoquinol + NADP(+) + n H(+)(out)</text>
        <dbReference type="Rhea" id="RHEA:42612"/>
        <dbReference type="Rhea" id="RHEA-COMP:9561"/>
        <dbReference type="Rhea" id="RHEA-COMP:9562"/>
        <dbReference type="ChEBI" id="CHEBI:15378"/>
        <dbReference type="ChEBI" id="CHEBI:17757"/>
        <dbReference type="ChEBI" id="CHEBI:57783"/>
        <dbReference type="ChEBI" id="CHEBI:58349"/>
        <dbReference type="ChEBI" id="CHEBI:62192"/>
    </reaction>
</comment>
<comment type="cofactor">
    <cofactor evidence="1">
        <name>[4Fe-4S] cluster</name>
        <dbReference type="ChEBI" id="CHEBI:49883"/>
    </cofactor>
    <text evidence="1">Binds 2 [4Fe-4S] clusters per subunit.</text>
</comment>
<comment type="subunit">
    <text evidence="1">NDH is composed of at least 16 different subunits, 5 of which are encoded in the nucleus.</text>
</comment>
<comment type="subcellular location">
    <subcellularLocation>
        <location evidence="1">Plastid</location>
        <location evidence="1">Chloroplast thylakoid membrane</location>
        <topology evidence="1">Peripheral membrane protein</topology>
    </subcellularLocation>
</comment>
<comment type="similarity">
    <text evidence="1">Belongs to the complex I 23 kDa subunit family.</text>
</comment>
<gene>
    <name evidence="1" type="primary">ndhI</name>
</gene>
<proteinExistence type="inferred from homology"/>
<dbReference type="EC" id="7.1.1.-" evidence="1"/>
<dbReference type="EMBL" id="DQ231562">
    <property type="protein sequence ID" value="ABB90091.1"/>
    <property type="molecule type" value="Genomic_DNA"/>
</dbReference>
<dbReference type="EMBL" id="DQ386163">
    <property type="protein sequence ID" value="ABD47111.1"/>
    <property type="molecule type" value="Genomic_DNA"/>
</dbReference>
<dbReference type="RefSeq" id="YP_635693.1">
    <property type="nucleotide sequence ID" value="NC_008096.2"/>
</dbReference>
<dbReference type="SMR" id="Q2VEC7"/>
<dbReference type="FunCoup" id="Q2VEC7">
    <property type="interactions" value="70"/>
</dbReference>
<dbReference type="STRING" id="4113.Q2VEC7"/>
<dbReference type="EnsemblPlants" id="PGSC0003DMT400029489">
    <property type="protein sequence ID" value="PGSC0003DMT400029489"/>
    <property type="gene ID" value="PGSC0003DMG401011339"/>
</dbReference>
<dbReference type="GeneID" id="4099909"/>
<dbReference type="Gramene" id="PGSC0003DMT400029489">
    <property type="protein sequence ID" value="PGSC0003DMT400029489"/>
    <property type="gene ID" value="PGSC0003DMG401011339"/>
</dbReference>
<dbReference type="KEGG" id="sot:4099909"/>
<dbReference type="HOGENOM" id="CLU_122804_0_0_1"/>
<dbReference type="InParanoid" id="Q2VEC7"/>
<dbReference type="OrthoDB" id="24758at2759"/>
<dbReference type="Proteomes" id="UP000011115">
    <property type="component" value="Unassembled WGS sequence"/>
</dbReference>
<dbReference type="ExpressionAtlas" id="Q2VEC7">
    <property type="expression patterns" value="baseline and differential"/>
</dbReference>
<dbReference type="GO" id="GO:0009535">
    <property type="term" value="C:chloroplast thylakoid membrane"/>
    <property type="evidence" value="ECO:0007669"/>
    <property type="project" value="UniProtKB-SubCell"/>
</dbReference>
<dbReference type="GO" id="GO:0051539">
    <property type="term" value="F:4 iron, 4 sulfur cluster binding"/>
    <property type="evidence" value="ECO:0007669"/>
    <property type="project" value="UniProtKB-KW"/>
</dbReference>
<dbReference type="GO" id="GO:0005506">
    <property type="term" value="F:iron ion binding"/>
    <property type="evidence" value="ECO:0007669"/>
    <property type="project" value="UniProtKB-UniRule"/>
</dbReference>
<dbReference type="GO" id="GO:0008137">
    <property type="term" value="F:NADH dehydrogenase (ubiquinone) activity"/>
    <property type="evidence" value="ECO:0007669"/>
    <property type="project" value="InterPro"/>
</dbReference>
<dbReference type="GO" id="GO:0048038">
    <property type="term" value="F:quinone binding"/>
    <property type="evidence" value="ECO:0007669"/>
    <property type="project" value="UniProtKB-KW"/>
</dbReference>
<dbReference type="GO" id="GO:0019684">
    <property type="term" value="P:photosynthesis, light reaction"/>
    <property type="evidence" value="ECO:0007669"/>
    <property type="project" value="UniProtKB-UniRule"/>
</dbReference>
<dbReference type="FunFam" id="3.30.70.3270:FF:000006">
    <property type="entry name" value="NAD(P)H-quinone oxidoreductase subunit I, chloroplastic"/>
    <property type="match status" value="1"/>
</dbReference>
<dbReference type="Gene3D" id="3.30.70.3270">
    <property type="match status" value="1"/>
</dbReference>
<dbReference type="HAMAP" id="MF_01351">
    <property type="entry name" value="NDH1_NuoI"/>
    <property type="match status" value="1"/>
</dbReference>
<dbReference type="InterPro" id="IPR017896">
    <property type="entry name" value="4Fe4S_Fe-S-bd"/>
</dbReference>
<dbReference type="InterPro" id="IPR017900">
    <property type="entry name" value="4Fe4S_Fe_S_CS"/>
</dbReference>
<dbReference type="InterPro" id="IPR010226">
    <property type="entry name" value="NADH_quinone_OxRdtase_chainI"/>
</dbReference>
<dbReference type="InterPro" id="IPR004497">
    <property type="entry name" value="NDHI"/>
</dbReference>
<dbReference type="NCBIfam" id="TIGR00403">
    <property type="entry name" value="ndhI"/>
    <property type="match status" value="1"/>
</dbReference>
<dbReference type="NCBIfam" id="TIGR01971">
    <property type="entry name" value="NuoI"/>
    <property type="match status" value="1"/>
</dbReference>
<dbReference type="NCBIfam" id="NF004537">
    <property type="entry name" value="PRK05888.1-3"/>
    <property type="match status" value="1"/>
</dbReference>
<dbReference type="PANTHER" id="PTHR47275">
    <property type="entry name" value="NAD(P)H-QUINONE OXIDOREDUCTASE SUBUNIT I, CHLOROPLASTIC"/>
    <property type="match status" value="1"/>
</dbReference>
<dbReference type="PANTHER" id="PTHR47275:SF1">
    <property type="entry name" value="NAD(P)H-QUINONE OXIDOREDUCTASE SUBUNIT I, CHLOROPLASTIC"/>
    <property type="match status" value="1"/>
</dbReference>
<dbReference type="Pfam" id="PF00037">
    <property type="entry name" value="Fer4"/>
    <property type="match status" value="2"/>
</dbReference>
<dbReference type="SUPFAM" id="SSF54862">
    <property type="entry name" value="4Fe-4S ferredoxins"/>
    <property type="match status" value="1"/>
</dbReference>
<dbReference type="PROSITE" id="PS00198">
    <property type="entry name" value="4FE4S_FER_1"/>
    <property type="match status" value="2"/>
</dbReference>
<dbReference type="PROSITE" id="PS51379">
    <property type="entry name" value="4FE4S_FER_2"/>
    <property type="match status" value="2"/>
</dbReference>
<evidence type="ECO:0000255" key="1">
    <source>
        <dbReference type="HAMAP-Rule" id="MF_01351"/>
    </source>
</evidence>
<name>NDHI_SOLTU</name>
<keyword id="KW-0004">4Fe-4S</keyword>
<keyword id="KW-0150">Chloroplast</keyword>
<keyword id="KW-0408">Iron</keyword>
<keyword id="KW-0411">Iron-sulfur</keyword>
<keyword id="KW-0472">Membrane</keyword>
<keyword id="KW-0479">Metal-binding</keyword>
<keyword id="KW-0520">NAD</keyword>
<keyword id="KW-0521">NADP</keyword>
<keyword id="KW-0934">Plastid</keyword>
<keyword id="KW-0618">Plastoquinone</keyword>
<keyword id="KW-0874">Quinone</keyword>
<keyword id="KW-1185">Reference proteome</keyword>
<keyword id="KW-0677">Repeat</keyword>
<keyword id="KW-0793">Thylakoid</keyword>
<keyword id="KW-1278">Translocase</keyword>
<geneLocation type="chloroplast"/>
<sequence>MLPMITEFINYGQQTIRAARYIGQGFMITLSHANRLPVTIQYPYEKLITSERFRGRIHFEFDKCIACEVCVRVCPIDLPVVDWKLETDIRKKRLLNYSIDFGICIFCGNCVEYCPTNCLSMTEEYELSTYDRHELNYNQIALGRLPMSVIDDYTIRTISNLPQINNE</sequence>
<reference key="1">
    <citation type="journal article" date="2006" name="Plant Cell Rep.">
        <title>The complete chloroplast genome sequences of Solanum tuberosum and comparative analysis with Solanaceae species identified the presence of a 241-bp deletion in cultivated potato chloroplast DNA sequence.</title>
        <authorList>
            <person name="Chung H.-J."/>
            <person name="Jung J.D."/>
            <person name="Park H.-W."/>
            <person name="Kim J.-H."/>
            <person name="Cha H.W."/>
            <person name="Min S.R."/>
            <person name="Jeong W.-J."/>
            <person name="Liu J.R."/>
        </authorList>
    </citation>
    <scope>NUCLEOTIDE SEQUENCE [LARGE SCALE GENOMIC DNA]</scope>
    <source>
        <strain>cv. Desiree</strain>
    </source>
</reference>
<reference key="2">
    <citation type="submission" date="2006-02" db="EMBL/GenBank/DDBJ databases">
        <title>Complete chloroplast genome sequences of Solanum tuberosum cultivar Desiree and comparative analyses with other Solanaceae genomes.</title>
        <authorList>
            <person name="Gargano D."/>
            <person name="Scotti N."/>
            <person name="Vezzi A."/>
            <person name="Bilardi A."/>
            <person name="Valle G."/>
            <person name="Grillo S."/>
            <person name="Cardi T."/>
        </authorList>
    </citation>
    <scope>NUCLEOTIDE SEQUENCE [LARGE SCALE GENOMIC DNA]</scope>
    <source>
        <strain>cv. Desiree</strain>
    </source>
</reference>
<protein>
    <recommendedName>
        <fullName evidence="1">NAD(P)H-quinone oxidoreductase subunit I, chloroplastic</fullName>
        <ecNumber evidence="1">7.1.1.-</ecNumber>
    </recommendedName>
    <alternativeName>
        <fullName evidence="1">NAD(P)H dehydrogenase subunit I</fullName>
        <shortName evidence="1">NDH subunit I</shortName>
    </alternativeName>
    <alternativeName>
        <fullName evidence="1">NADH-plastoquinone oxidoreductase subunit I</fullName>
    </alternativeName>
</protein>